<keyword id="KW-0012">Acyltransferase</keyword>
<keyword id="KW-0998">Cell outer membrane</keyword>
<keyword id="KW-0449">Lipoprotein</keyword>
<keyword id="KW-0472">Membrane</keyword>
<keyword id="KW-0564">Palmitate</keyword>
<keyword id="KW-0732">Signal</keyword>
<keyword id="KW-0808">Transferase</keyword>
<feature type="signal peptide" evidence="1">
    <location>
        <begin position="1"/>
        <end position="14"/>
    </location>
</feature>
<feature type="chain" id="PRO_0000414446" description="Lipid A acyltransferase PagP">
    <location>
        <begin position="15"/>
        <end position="185"/>
    </location>
</feature>
<feature type="active site" evidence="1">
    <location>
        <position position="57"/>
    </location>
</feature>
<feature type="active site" evidence="1">
    <location>
        <position position="100"/>
    </location>
</feature>
<feature type="active site" evidence="1">
    <location>
        <position position="101"/>
    </location>
</feature>
<feature type="site" description="Role in lipopolysaccharide recognition" evidence="1">
    <location>
        <position position="66"/>
    </location>
</feature>
<feature type="site" description="Role in the phospholipid gating" evidence="1">
    <location>
        <position position="171"/>
    </location>
</feature>
<feature type="lipid moiety-binding region" description="N-palmitoyl cysteine" evidence="1">
    <location>
        <position position="15"/>
    </location>
</feature>
<feature type="lipid moiety-binding region" description="S-diacylglycerol cysteine" evidence="1">
    <location>
        <position position="15"/>
    </location>
</feature>
<accession>D0FUE8</accession>
<evidence type="ECO:0000255" key="1">
    <source>
        <dbReference type="HAMAP-Rule" id="MF_00837"/>
    </source>
</evidence>
<gene>
    <name evidence="1" type="primary">pagP</name>
    <name type="ordered locus">EpC_24980</name>
</gene>
<proteinExistence type="inferred from homology"/>
<organism>
    <name type="scientific">Erwinia pyrifoliae (strain DSM 12162 / Ep1/96)</name>
    <dbReference type="NCBI Taxonomy" id="634499"/>
    <lineage>
        <taxon>Bacteria</taxon>
        <taxon>Pseudomonadati</taxon>
        <taxon>Pseudomonadota</taxon>
        <taxon>Gammaproteobacteria</taxon>
        <taxon>Enterobacterales</taxon>
        <taxon>Erwiniaceae</taxon>
        <taxon>Erwinia</taxon>
    </lineage>
</organism>
<sequence>MKLKPVLYLLMLLGCLGLKSAHAATLAHGISASWHSFSQTWNEPQTFDPYIPSIIWHNRWTYDADKIDKYNERPWGAGGGVSHFDKKGNWNGIYLMAFKDSFNKWELISGYGWEKTWRPLRDPDFHLGLGYTAGVTMRDNWSYIPIPVLLPLASIGYEYVSFQMTYIPGTYNNGNVYFAWLRWQL</sequence>
<comment type="function">
    <text evidence="1">Transfers a fatty acid residue from the sn-1 position of a phospholipid to the N-linked hydroxyfatty acid chain on the proximal unit of lipid A or its precursors.</text>
</comment>
<comment type="catalytic activity">
    <reaction evidence="1">
        <text>a lipid A + a 1,2-diacyl-sn-glycero-3-phosphocholine = a hepta-acyl lipid A + a 2-acyl-sn-glycero-3-phosphocholine</text>
        <dbReference type="Rhea" id="RHEA:74275"/>
        <dbReference type="ChEBI" id="CHEBI:57643"/>
        <dbReference type="ChEBI" id="CHEBI:57875"/>
        <dbReference type="ChEBI" id="CHEBI:193141"/>
        <dbReference type="ChEBI" id="CHEBI:193142"/>
        <dbReference type="EC" id="2.3.1.251"/>
    </reaction>
</comment>
<comment type="catalytic activity">
    <reaction evidence="1">
        <text>a lipid IVA + a 1,2-diacyl-sn-glycero-3-phosphocholine = a lipid IVB + a 2-acyl-sn-glycero-3-phosphocholine</text>
        <dbReference type="Rhea" id="RHEA:74279"/>
        <dbReference type="ChEBI" id="CHEBI:57643"/>
        <dbReference type="ChEBI" id="CHEBI:57875"/>
        <dbReference type="ChEBI" id="CHEBI:176425"/>
        <dbReference type="ChEBI" id="CHEBI:193143"/>
        <dbReference type="EC" id="2.3.1.251"/>
    </reaction>
</comment>
<comment type="catalytic activity">
    <reaction evidence="1">
        <text>a lipid IIA + a 1,2-diacyl-sn-glycero-3-phosphocholine = a lipid IIB + a 2-acyl-sn-glycero-3-phosphocholine</text>
        <dbReference type="Rhea" id="RHEA:74283"/>
        <dbReference type="ChEBI" id="CHEBI:57643"/>
        <dbReference type="ChEBI" id="CHEBI:57875"/>
        <dbReference type="ChEBI" id="CHEBI:193144"/>
        <dbReference type="ChEBI" id="CHEBI:193145"/>
        <dbReference type="EC" id="2.3.1.251"/>
    </reaction>
</comment>
<comment type="subunit">
    <text evidence="1">Homodimer.</text>
</comment>
<comment type="subcellular location">
    <subcellularLocation>
        <location evidence="1">Cell outer membrane</location>
        <topology evidence="1">Lipid-anchor</topology>
    </subcellularLocation>
</comment>
<comment type="similarity">
    <text evidence="1">Belongs to the lipid A palmitoyltransferase family.</text>
</comment>
<reference key="1">
    <citation type="journal article" date="2010" name="BMC Genomics">
        <title>Genome comparison of the epiphytic bacteria Erwinia billingiae and E. tasmaniensis with the pear pathogen E. pyrifoliae.</title>
        <authorList>
            <person name="Kube M."/>
            <person name="Migdoll A.M."/>
            <person name="Gehring I."/>
            <person name="Heitmann K."/>
            <person name="Mayer Y."/>
            <person name="Kuhl H."/>
            <person name="Knaust F."/>
            <person name="Geider K."/>
            <person name="Reinhardt R."/>
        </authorList>
    </citation>
    <scope>NUCLEOTIDE SEQUENCE [LARGE SCALE GENOMIC DNA]</scope>
    <source>
        <strain>DSM 12162 / Ep1/96</strain>
    </source>
</reference>
<dbReference type="EC" id="2.3.1.251" evidence="1"/>
<dbReference type="EMBL" id="FP236842">
    <property type="protein sequence ID" value="CAX56277.1"/>
    <property type="molecule type" value="Genomic_DNA"/>
</dbReference>
<dbReference type="RefSeq" id="WP_012668771.1">
    <property type="nucleotide sequence ID" value="NC_012214.1"/>
</dbReference>
<dbReference type="SMR" id="D0FUE8"/>
<dbReference type="GeneID" id="92236338"/>
<dbReference type="KEGG" id="epy:EpC_24980"/>
<dbReference type="HOGENOM" id="CLU_104099_0_0_6"/>
<dbReference type="Proteomes" id="UP000007061">
    <property type="component" value="Chromosome"/>
</dbReference>
<dbReference type="GO" id="GO:0009279">
    <property type="term" value="C:cell outer membrane"/>
    <property type="evidence" value="ECO:0007669"/>
    <property type="project" value="UniProtKB-SubCell"/>
</dbReference>
<dbReference type="GO" id="GO:0016746">
    <property type="term" value="F:acyltransferase activity"/>
    <property type="evidence" value="ECO:0007669"/>
    <property type="project" value="UniProtKB-UniRule"/>
</dbReference>
<dbReference type="GO" id="GO:0009245">
    <property type="term" value="P:lipid A biosynthetic process"/>
    <property type="evidence" value="ECO:0007669"/>
    <property type="project" value="UniProtKB-UniRule"/>
</dbReference>
<dbReference type="FunFam" id="2.40.160.20:FF:000002">
    <property type="entry name" value="Lipid A palmitoyltransferase PagP"/>
    <property type="match status" value="1"/>
</dbReference>
<dbReference type="Gene3D" id="2.40.160.20">
    <property type="match status" value="1"/>
</dbReference>
<dbReference type="HAMAP" id="MF_00837">
    <property type="entry name" value="PagP_transferase"/>
    <property type="match status" value="1"/>
</dbReference>
<dbReference type="InterPro" id="IPR009746">
    <property type="entry name" value="LipidA_acyl_PagP"/>
</dbReference>
<dbReference type="InterPro" id="IPR011250">
    <property type="entry name" value="OMP/PagP_b-brl"/>
</dbReference>
<dbReference type="NCBIfam" id="NF008271">
    <property type="entry name" value="PRK11045.1"/>
    <property type="match status" value="1"/>
</dbReference>
<dbReference type="Pfam" id="PF07017">
    <property type="entry name" value="PagP"/>
    <property type="match status" value="1"/>
</dbReference>
<dbReference type="SUPFAM" id="SSF56925">
    <property type="entry name" value="OMPA-like"/>
    <property type="match status" value="1"/>
</dbReference>
<dbReference type="PROSITE" id="PS51257">
    <property type="entry name" value="PROKAR_LIPOPROTEIN"/>
    <property type="match status" value="1"/>
</dbReference>
<name>PAGP_ERWPE</name>
<protein>
    <recommendedName>
        <fullName evidence="1">Lipid A acyltransferase PagP</fullName>
        <ecNumber evidence="1">2.3.1.251</ecNumber>
    </recommendedName>
    <alternativeName>
        <fullName evidence="1">Lipid A acylation protein</fullName>
    </alternativeName>
</protein>